<organism>
    <name type="scientific">Desulfitobacterium hafniense (strain DSM 10664 / DCB-2)</name>
    <dbReference type="NCBI Taxonomy" id="272564"/>
    <lineage>
        <taxon>Bacteria</taxon>
        <taxon>Bacillati</taxon>
        <taxon>Bacillota</taxon>
        <taxon>Clostridia</taxon>
        <taxon>Eubacteriales</taxon>
        <taxon>Desulfitobacteriaceae</taxon>
        <taxon>Desulfitobacterium</taxon>
    </lineage>
</organism>
<dbReference type="EC" id="3.5.1.88" evidence="1"/>
<dbReference type="EMBL" id="CP001336">
    <property type="protein sequence ID" value="ACL21869.1"/>
    <property type="molecule type" value="Genomic_DNA"/>
</dbReference>
<dbReference type="RefSeq" id="WP_005811815.1">
    <property type="nucleotide sequence ID" value="NC_011830.1"/>
</dbReference>
<dbReference type="SMR" id="B8FS81"/>
<dbReference type="KEGG" id="dhd:Dhaf_3853"/>
<dbReference type="HOGENOM" id="CLU_061901_4_2_9"/>
<dbReference type="Proteomes" id="UP000007726">
    <property type="component" value="Chromosome"/>
</dbReference>
<dbReference type="GO" id="GO:0046872">
    <property type="term" value="F:metal ion binding"/>
    <property type="evidence" value="ECO:0007669"/>
    <property type="project" value="UniProtKB-KW"/>
</dbReference>
<dbReference type="GO" id="GO:0042586">
    <property type="term" value="F:peptide deformylase activity"/>
    <property type="evidence" value="ECO:0007669"/>
    <property type="project" value="UniProtKB-UniRule"/>
</dbReference>
<dbReference type="GO" id="GO:0043686">
    <property type="term" value="P:co-translational protein modification"/>
    <property type="evidence" value="ECO:0007669"/>
    <property type="project" value="TreeGrafter"/>
</dbReference>
<dbReference type="GO" id="GO:0006412">
    <property type="term" value="P:translation"/>
    <property type="evidence" value="ECO:0007669"/>
    <property type="project" value="UniProtKB-UniRule"/>
</dbReference>
<dbReference type="CDD" id="cd00487">
    <property type="entry name" value="Pep_deformylase"/>
    <property type="match status" value="1"/>
</dbReference>
<dbReference type="Gene3D" id="3.90.45.10">
    <property type="entry name" value="Peptide deformylase"/>
    <property type="match status" value="1"/>
</dbReference>
<dbReference type="HAMAP" id="MF_00163">
    <property type="entry name" value="Pep_deformylase"/>
    <property type="match status" value="1"/>
</dbReference>
<dbReference type="InterPro" id="IPR023635">
    <property type="entry name" value="Peptide_deformylase"/>
</dbReference>
<dbReference type="InterPro" id="IPR036821">
    <property type="entry name" value="Peptide_deformylase_sf"/>
</dbReference>
<dbReference type="NCBIfam" id="TIGR00079">
    <property type="entry name" value="pept_deformyl"/>
    <property type="match status" value="1"/>
</dbReference>
<dbReference type="NCBIfam" id="NF001159">
    <property type="entry name" value="PRK00150.1-3"/>
    <property type="match status" value="1"/>
</dbReference>
<dbReference type="PANTHER" id="PTHR10458">
    <property type="entry name" value="PEPTIDE DEFORMYLASE"/>
    <property type="match status" value="1"/>
</dbReference>
<dbReference type="PANTHER" id="PTHR10458:SF22">
    <property type="entry name" value="PEPTIDE DEFORMYLASE"/>
    <property type="match status" value="1"/>
</dbReference>
<dbReference type="Pfam" id="PF01327">
    <property type="entry name" value="Pep_deformylase"/>
    <property type="match status" value="1"/>
</dbReference>
<dbReference type="PIRSF" id="PIRSF004749">
    <property type="entry name" value="Pep_def"/>
    <property type="match status" value="1"/>
</dbReference>
<dbReference type="PRINTS" id="PR01576">
    <property type="entry name" value="PDEFORMYLASE"/>
</dbReference>
<dbReference type="SUPFAM" id="SSF56420">
    <property type="entry name" value="Peptide deformylase"/>
    <property type="match status" value="1"/>
</dbReference>
<name>DEF_DESHD</name>
<evidence type="ECO:0000255" key="1">
    <source>
        <dbReference type="HAMAP-Rule" id="MF_00163"/>
    </source>
</evidence>
<gene>
    <name evidence="1" type="primary">def</name>
    <name type="ordered locus">Dhaf_3853</name>
</gene>
<accession>B8FS81</accession>
<proteinExistence type="inferred from homology"/>
<comment type="function">
    <text evidence="1">Removes the formyl group from the N-terminal Met of newly synthesized proteins. Requires at least a dipeptide for an efficient rate of reaction. N-terminal L-methionine is a prerequisite for activity but the enzyme has broad specificity at other positions.</text>
</comment>
<comment type="catalytic activity">
    <reaction evidence="1">
        <text>N-terminal N-formyl-L-methionyl-[peptide] + H2O = N-terminal L-methionyl-[peptide] + formate</text>
        <dbReference type="Rhea" id="RHEA:24420"/>
        <dbReference type="Rhea" id="RHEA-COMP:10639"/>
        <dbReference type="Rhea" id="RHEA-COMP:10640"/>
        <dbReference type="ChEBI" id="CHEBI:15377"/>
        <dbReference type="ChEBI" id="CHEBI:15740"/>
        <dbReference type="ChEBI" id="CHEBI:49298"/>
        <dbReference type="ChEBI" id="CHEBI:64731"/>
        <dbReference type="EC" id="3.5.1.88"/>
    </reaction>
</comment>
<comment type="cofactor">
    <cofactor evidence="1">
        <name>Fe(2+)</name>
        <dbReference type="ChEBI" id="CHEBI:29033"/>
    </cofactor>
    <text evidence="1">Binds 1 Fe(2+) ion.</text>
</comment>
<comment type="similarity">
    <text evidence="1">Belongs to the polypeptide deformylase family.</text>
</comment>
<reference key="1">
    <citation type="journal article" date="2012" name="BMC Microbiol.">
        <title>Genome sequence of Desulfitobacterium hafniense DCB-2, a Gram-positive anaerobe capable of dehalogenation and metal reduction.</title>
        <authorList>
            <person name="Kim S.H."/>
            <person name="Harzman C."/>
            <person name="Davis J.K."/>
            <person name="Hutcheson R."/>
            <person name="Broderick J.B."/>
            <person name="Marsh T.L."/>
            <person name="Tiedje J.M."/>
        </authorList>
    </citation>
    <scope>NUCLEOTIDE SEQUENCE [LARGE SCALE GENOMIC DNA]</scope>
    <source>
        <strain>DSM 10664 / DCB-2</strain>
    </source>
</reference>
<feature type="chain" id="PRO_1000200724" description="Peptide deformylase">
    <location>
        <begin position="1"/>
        <end position="150"/>
    </location>
</feature>
<feature type="active site" evidence="1">
    <location>
        <position position="131"/>
    </location>
</feature>
<feature type="binding site" evidence="1">
    <location>
        <position position="88"/>
    </location>
    <ligand>
        <name>Fe cation</name>
        <dbReference type="ChEBI" id="CHEBI:24875"/>
    </ligand>
</feature>
<feature type="binding site" evidence="1">
    <location>
        <position position="130"/>
    </location>
    <ligand>
        <name>Fe cation</name>
        <dbReference type="ChEBI" id="CHEBI:24875"/>
    </ligand>
</feature>
<feature type="binding site" evidence="1">
    <location>
        <position position="134"/>
    </location>
    <ligand>
        <name>Fe cation</name>
        <dbReference type="ChEBI" id="CHEBI:24875"/>
    </ligand>
</feature>
<keyword id="KW-0378">Hydrolase</keyword>
<keyword id="KW-0408">Iron</keyword>
<keyword id="KW-0479">Metal-binding</keyword>
<keyword id="KW-0648">Protein biosynthesis</keyword>
<sequence length="150" mass="16189">MAIYQIVEIGSEVLREKAVPVKEITPNIAKLLDNMLDTLYDANGVGLAAPQVGVSKRVVVIDVGEGPLELINPVIIAKEGEDLDDEGCLSIPGITGQVARAAKVKVEALNRQGELQVIEGEGLLSRCLQHEIDHLEGILFVDKAKKTSRR</sequence>
<protein>
    <recommendedName>
        <fullName evidence="1">Peptide deformylase</fullName>
        <shortName evidence="1">PDF</shortName>
        <ecNumber evidence="1">3.5.1.88</ecNumber>
    </recommendedName>
    <alternativeName>
        <fullName evidence="1">Polypeptide deformylase</fullName>
    </alternativeName>
</protein>